<keyword id="KW-0067">ATP-binding</keyword>
<keyword id="KW-0963">Cytoplasm</keyword>
<keyword id="KW-0378">Hydrolase</keyword>
<keyword id="KW-0472">Membrane</keyword>
<keyword id="KW-0547">Nucleotide-binding</keyword>
<keyword id="KW-0576">Peroxisome</keyword>
<keyword id="KW-0962">Peroxisome biogenesis</keyword>
<name>PEX6_PENCH</name>
<protein>
    <recommendedName>
        <fullName evidence="4">Peroxisomal ATPase PEX6</fullName>
        <ecNumber evidence="1">3.6.4.-</ecNumber>
    </recommendedName>
    <alternativeName>
        <fullName>Peroxin-6</fullName>
    </alternativeName>
    <alternativeName>
        <fullName>Peroxisomal biogenesis factor 6</fullName>
    </alternativeName>
</protein>
<accession>Q9HG03</accession>
<sequence length="1459" mass="157054">MDFEQYGQSSQQPRQRRRRAGKRRLNNKTPIAARLALDPQLRGKVGILSEDLANDLFQQQALQDVTTSDDGVLYVAIAPHTPTYTSVEDQAWTILPVRIQPTERSPVAMSHSTVLFPESADSLQPFLQALGKVDSSRNSLQAHRSVEIRILDVAPIHLDTIFVTVERHLLRNHDDVQTKFGGGFTNAQGPNGLWGKTGKSVEAKKYSKRAAADAEQRLTAAVREALGAQRIVHTGDVLPLPLPSHPITYAPPPPARISFCEPVSQGLLMSTTKIVLVQARPQGIRAQQTMPSRSALLKQVAEDEADDTSNEQFYSAAEDKPGESGTEMEVTSAAEESETEGSAGSMSDSSDDSLEDMISLSAPELPQPPSGVMSSLTSATPRAGGRRSDGIHTPGSVASNFTSATMRPGRGGGKTFKVEGLLQQVPNEVLHPRPRDDEDVDSFVFVDISTLAKIGCFSGDWVRIEAAEEPQLNMFASLKFGSFNDSPEDSGDWRPVKIFGLSGLPSSKPRYAINHSGERRPSISQRPPTRLTPSVFVPPLLLGNIENPKYLRISPMTFATPNGSSKPGILQHMKNTAAKNPPLAKEVTLLKVSTPLSMDRVLQPALFAGLKQYFESRRRILKSGDLVGISVDEGLGRAVFSGTGSGDSASQEEDITIRLGQGANATNAGTRKIGVAWFRVGQVAPTTVEELEETGEDQWGGVAVLDPATTRMVQAGSDVSRVPGVLGNGWEYWLGVKTIPKTVHDAPTPHGIVADPPQSVIPPLQQRIRDLMSAATSPRAIQLGMKPVFILLRSQQRHIGKATVATRACSDIGIHTFPIDAYDILTEGGANGGDVKTEAYLKARAERAFHCGANCTALLIRHIEVLTADRIVTAMSDILNDARVVIATTTDVETIPEGIRSLITHEFEMGAPEEKEREGILQNAVTERGIRLSADVDLGSIALKTAALVAGDLVDVVERAAGARTARLESLAEASKKISGSEVFVRDVLLAGGDGARGVTKADFDAAVEAARKNFADSIGAPKIPNVGWDDVGGLTNVKDALVETIQLPLERPELFAKGMKKRSGILFYGPPGTGKTLLAKAIATEFSLNFFSVKGPELLNMYIGESEANVRRVFQRARDARPCVVFFDELDSVAPKRGNQGDSGGVMDRIVSQLLAELDGMNGGEENSGGVFVIGATNRPDLLDTALLRPGRFDKMLYLGVSDTHRKQATILEALTRKFALHPDVSLDRVAEQLPLTYTGADLYALCSDAMLKAITRKATAVDEKINALPNGPVSTAWFFDHLATKEDVNVMVTEEDFLSAQGELVPSVSAKELEHFERIRQTFEAVDKSKQDPAAAAPQTIAEAMEAFSLGGSAIPEEAPTINGDSLTPGGIHGRIKGLNRWPGNPVRSTSGQSTTSSKGKGKSVSKKGKSRTGAESDGSVDGDDEDMADANSKEDEDEDDYVVRTDHLRNPMEEVE</sequence>
<feature type="chain" id="PRO_0000084616" description="Peroxisomal ATPase PEX6">
    <location>
        <begin position="1"/>
        <end position="1459"/>
    </location>
</feature>
<feature type="region of interest" description="Disordered" evidence="3">
    <location>
        <begin position="1"/>
        <end position="28"/>
    </location>
</feature>
<feature type="region of interest" description="Disordered" evidence="3">
    <location>
        <begin position="316"/>
        <end position="410"/>
    </location>
</feature>
<feature type="region of interest" description="Disordered" evidence="3">
    <location>
        <begin position="1357"/>
        <end position="1459"/>
    </location>
</feature>
<feature type="compositionally biased region" description="Low complexity" evidence="3">
    <location>
        <begin position="1"/>
        <end position="13"/>
    </location>
</feature>
<feature type="compositionally biased region" description="Basic residues" evidence="3">
    <location>
        <begin position="14"/>
        <end position="26"/>
    </location>
</feature>
<feature type="compositionally biased region" description="Low complexity" evidence="3">
    <location>
        <begin position="327"/>
        <end position="348"/>
    </location>
</feature>
<feature type="compositionally biased region" description="Polar residues" evidence="3">
    <location>
        <begin position="396"/>
        <end position="405"/>
    </location>
</feature>
<feature type="compositionally biased region" description="Low complexity" evidence="3">
    <location>
        <begin position="1391"/>
        <end position="1401"/>
    </location>
</feature>
<feature type="compositionally biased region" description="Basic residues" evidence="3">
    <location>
        <begin position="1402"/>
        <end position="1413"/>
    </location>
</feature>
<feature type="compositionally biased region" description="Acidic residues" evidence="3">
    <location>
        <begin position="1421"/>
        <end position="1443"/>
    </location>
</feature>
<feature type="compositionally biased region" description="Basic and acidic residues" evidence="3">
    <location>
        <begin position="1444"/>
        <end position="1459"/>
    </location>
</feature>
<feature type="binding site" evidence="2">
    <location>
        <begin position="1070"/>
        <end position="1077"/>
    </location>
    <ligand>
        <name>ATP</name>
        <dbReference type="ChEBI" id="CHEBI:30616"/>
    </ligand>
</feature>
<evidence type="ECO:0000250" key="1">
    <source>
        <dbReference type="UniProtKB" id="P33760"/>
    </source>
</evidence>
<evidence type="ECO:0000255" key="2"/>
<evidence type="ECO:0000256" key="3">
    <source>
        <dbReference type="SAM" id="MobiDB-lite"/>
    </source>
</evidence>
<evidence type="ECO:0000305" key="4"/>
<dbReference type="EC" id="3.6.4.-" evidence="1"/>
<dbReference type="EMBL" id="AF233277">
    <property type="protein sequence ID" value="AAG09749.1"/>
    <property type="molecule type" value="Genomic_DNA"/>
</dbReference>
<dbReference type="SMR" id="Q9HG03"/>
<dbReference type="PhylomeDB" id="Q9HG03"/>
<dbReference type="GO" id="GO:0005829">
    <property type="term" value="C:cytosol"/>
    <property type="evidence" value="ECO:0007669"/>
    <property type="project" value="UniProtKB-SubCell"/>
</dbReference>
<dbReference type="GO" id="GO:0005778">
    <property type="term" value="C:peroxisomal membrane"/>
    <property type="evidence" value="ECO:0007669"/>
    <property type="project" value="UniProtKB-SubCell"/>
</dbReference>
<dbReference type="GO" id="GO:0005524">
    <property type="term" value="F:ATP binding"/>
    <property type="evidence" value="ECO:0007669"/>
    <property type="project" value="UniProtKB-KW"/>
</dbReference>
<dbReference type="GO" id="GO:0016887">
    <property type="term" value="F:ATP hydrolysis activity"/>
    <property type="evidence" value="ECO:0007669"/>
    <property type="project" value="InterPro"/>
</dbReference>
<dbReference type="GO" id="GO:0016558">
    <property type="term" value="P:protein import into peroxisome matrix"/>
    <property type="evidence" value="ECO:0007669"/>
    <property type="project" value="TreeGrafter"/>
</dbReference>
<dbReference type="CDD" id="cd19527">
    <property type="entry name" value="RecA-like_PEX6_r2"/>
    <property type="match status" value="1"/>
</dbReference>
<dbReference type="FunFam" id="1.10.8.60:FF:000108">
    <property type="entry name" value="Peroxisomal biogenesis factor 6"/>
    <property type="match status" value="1"/>
</dbReference>
<dbReference type="FunFam" id="3.40.50.300:FF:000109">
    <property type="entry name" value="Peroxisomal biogenesis factor 6"/>
    <property type="match status" value="1"/>
</dbReference>
<dbReference type="FunFam" id="1.10.8.60:FF:000039">
    <property type="entry name" value="peroxisome biogenesis factor 6"/>
    <property type="match status" value="1"/>
</dbReference>
<dbReference type="Gene3D" id="1.10.8.60">
    <property type="match status" value="2"/>
</dbReference>
<dbReference type="Gene3D" id="3.40.50.300">
    <property type="entry name" value="P-loop containing nucleotide triphosphate hydrolases"/>
    <property type="match status" value="2"/>
</dbReference>
<dbReference type="InterPro" id="IPR003593">
    <property type="entry name" value="AAA+_ATPase"/>
</dbReference>
<dbReference type="InterPro" id="IPR050168">
    <property type="entry name" value="AAA_ATPase_domain"/>
</dbReference>
<dbReference type="InterPro" id="IPR003959">
    <property type="entry name" value="ATPase_AAA_core"/>
</dbReference>
<dbReference type="InterPro" id="IPR003960">
    <property type="entry name" value="ATPase_AAA_CS"/>
</dbReference>
<dbReference type="InterPro" id="IPR027417">
    <property type="entry name" value="P-loop_NTPase"/>
</dbReference>
<dbReference type="InterPro" id="IPR056995">
    <property type="entry name" value="PEX6_4th_dom"/>
</dbReference>
<dbReference type="InterPro" id="IPR047533">
    <property type="entry name" value="RecA-like_PEX6_r2"/>
</dbReference>
<dbReference type="PANTHER" id="PTHR23077">
    <property type="entry name" value="AAA-FAMILY ATPASE"/>
    <property type="match status" value="1"/>
</dbReference>
<dbReference type="PANTHER" id="PTHR23077:SF9">
    <property type="entry name" value="PEROXISOMAL ATPASE PEX6"/>
    <property type="match status" value="1"/>
</dbReference>
<dbReference type="Pfam" id="PF00004">
    <property type="entry name" value="AAA"/>
    <property type="match status" value="1"/>
</dbReference>
<dbReference type="Pfam" id="PF23315">
    <property type="entry name" value="PEX6_4th"/>
    <property type="match status" value="1"/>
</dbReference>
<dbReference type="Pfam" id="PF23120">
    <property type="entry name" value="PEX6_N"/>
    <property type="match status" value="1"/>
</dbReference>
<dbReference type="SMART" id="SM00382">
    <property type="entry name" value="AAA"/>
    <property type="match status" value="1"/>
</dbReference>
<dbReference type="SUPFAM" id="SSF52540">
    <property type="entry name" value="P-loop containing nucleoside triphosphate hydrolases"/>
    <property type="match status" value="2"/>
</dbReference>
<dbReference type="PROSITE" id="PS00674">
    <property type="entry name" value="AAA"/>
    <property type="match status" value="1"/>
</dbReference>
<proteinExistence type="inferred from homology"/>
<gene>
    <name type="primary">pex6</name>
</gene>
<comment type="function">
    <text evidence="1">Component of the PEX1-PEX6 AAA ATPase complex, a protein dislocase complex that mediates the ATP-dependent extraction of the PEX5 receptor from peroxisomal membranes, an essential step for PEX5 recycling. Specifically recognizes PEX5 monoubiquitinated at 'Cys-6', and pulls it out of the peroxisome lumen through the PEX2-PEX10-PEX12 retrotranslocation channel. Extraction by the PEX1-PEX6 AAA ATPase complex is accompanied by unfolding of the TPR repeats and release of bound cargo from PEX5.</text>
</comment>
<comment type="catalytic activity">
    <reaction evidence="1">
        <text>ATP + H2O = ADP + phosphate + H(+)</text>
        <dbReference type="Rhea" id="RHEA:13065"/>
        <dbReference type="ChEBI" id="CHEBI:15377"/>
        <dbReference type="ChEBI" id="CHEBI:15378"/>
        <dbReference type="ChEBI" id="CHEBI:30616"/>
        <dbReference type="ChEBI" id="CHEBI:43474"/>
        <dbReference type="ChEBI" id="CHEBI:456216"/>
    </reaction>
    <physiologicalReaction direction="left-to-right" evidence="1">
        <dbReference type="Rhea" id="RHEA:13066"/>
    </physiologicalReaction>
</comment>
<comment type="subunit">
    <text evidence="1">Interacts with PEX1; forming the PEX1-PEX6 AAA ATPase complex, which is composed of a heterohexamer formed by a trimer of PEX1-PEX6 dimers.</text>
</comment>
<comment type="subcellular location">
    <subcellularLocation>
        <location evidence="1">Cytoplasm</location>
        <location evidence="1">Cytosol</location>
    </subcellularLocation>
    <subcellularLocation>
        <location evidence="1">Peroxisome membrane</location>
        <topology evidence="1">Peripheral membrane protein</topology>
        <orientation evidence="1">Cytoplasmic side</orientation>
    </subcellularLocation>
</comment>
<comment type="similarity">
    <text evidence="4">Belongs to the AAA ATPase family.</text>
</comment>
<organism>
    <name type="scientific">Penicillium chrysogenum</name>
    <name type="common">Penicillium notatum</name>
    <dbReference type="NCBI Taxonomy" id="5076"/>
    <lineage>
        <taxon>Eukaryota</taxon>
        <taxon>Fungi</taxon>
        <taxon>Dikarya</taxon>
        <taxon>Ascomycota</taxon>
        <taxon>Pezizomycotina</taxon>
        <taxon>Eurotiomycetes</taxon>
        <taxon>Eurotiomycetidae</taxon>
        <taxon>Eurotiales</taxon>
        <taxon>Aspergillaceae</taxon>
        <taxon>Penicillium</taxon>
        <taxon>Penicillium chrysogenum species complex</taxon>
    </lineage>
</organism>
<reference key="1">
    <citation type="journal article" date="2000" name="Appl. Microbiol. Biotechnol.">
        <title>Isolation of Penicillium chrysogenum PEX1 and PEX6 encoding AAA proteins involved in peroxisome biogenesis.</title>
        <authorList>
            <person name="Kiel J.A.K.W."/>
            <person name="Hilbrands R.E."/>
            <person name="Bovenberg R.A."/>
            <person name="Veenhuis M."/>
        </authorList>
    </citation>
    <scope>NUCLEOTIDE SEQUENCE [GENOMIC DNA]</scope>
</reference>